<comment type="function">
    <text evidence="1">Forms part of the ribosomal stalk, playing a central role in the interaction of the ribosome with GTP-bound translation factors.</text>
</comment>
<comment type="subunit">
    <text evidence="1">Part of the ribosomal stalk of the 50S ribosomal subunit. The N-terminus interacts with L11 and the large rRNA to form the base of the stalk. The C-terminus forms an elongated spine to which L12 dimers bind in a sequential fashion forming a multimeric L10(L12)X complex.</text>
</comment>
<comment type="similarity">
    <text evidence="1">Belongs to the universal ribosomal protein uL10 family.</text>
</comment>
<gene>
    <name evidence="1" type="primary">rplJ</name>
    <name type="ordered locus">BAPKO_0406</name>
    <name type="ordered locus">BafPKo_0393</name>
</gene>
<organism>
    <name type="scientific">Borreliella afzelii (strain PKo)</name>
    <name type="common">Borrelia afzelii</name>
    <dbReference type="NCBI Taxonomy" id="390236"/>
    <lineage>
        <taxon>Bacteria</taxon>
        <taxon>Pseudomonadati</taxon>
        <taxon>Spirochaetota</taxon>
        <taxon>Spirochaetia</taxon>
        <taxon>Spirochaetales</taxon>
        <taxon>Borreliaceae</taxon>
        <taxon>Borreliella</taxon>
    </lineage>
</organism>
<proteinExistence type="inferred from homology"/>
<keyword id="KW-0687">Ribonucleoprotein</keyword>
<keyword id="KW-0689">Ribosomal protein</keyword>
<keyword id="KW-0694">RNA-binding</keyword>
<keyword id="KW-0699">rRNA-binding</keyword>
<name>RL10_BORAP</name>
<reference key="1">
    <citation type="journal article" date="2006" name="BMC Genomics">
        <title>Comparative genome analysis: selection pressure on the Borrelia vls cassettes is essential for infectivity.</title>
        <authorList>
            <person name="Gloeckner G."/>
            <person name="Schulte-Spechtel U."/>
            <person name="Schilhabel M."/>
            <person name="Felder M."/>
            <person name="Suehnel J."/>
            <person name="Wilske B."/>
            <person name="Platzer M."/>
        </authorList>
    </citation>
    <scope>NUCLEOTIDE SEQUENCE [LARGE SCALE GENOMIC DNA]</scope>
    <source>
        <strain>PKo</strain>
    </source>
</reference>
<reference key="2">
    <citation type="journal article" date="2011" name="J. Bacteriol.">
        <title>Whole-genome sequences of two Borrelia afzelii and two Borrelia garinii Lyme disease agent isolates.</title>
        <authorList>
            <person name="Casjens S.R."/>
            <person name="Mongodin E.F."/>
            <person name="Qiu W.G."/>
            <person name="Dunn J.J."/>
            <person name="Luft B.J."/>
            <person name="Fraser-Liggett C.M."/>
            <person name="Schutzer S.E."/>
        </authorList>
    </citation>
    <scope>NUCLEOTIDE SEQUENCE [LARGE SCALE GENOMIC DNA]</scope>
    <source>
        <strain>PKo</strain>
    </source>
</reference>
<sequence length="162" mass="18121">MSTKINSKKLEMFDLLKKFIDSKQNIFFLDYRGLSVSQLTDLRNKIEGEHGALKVVKNNIMKMVLKEKNIDVVDSCLVGPTVVVTALEEANVIAKIFYDFVKTTTLKVKGGFVLGEFYDEAKVQAYSKLPTKKESISLFASVLKAPVSKLVRTLKALADVKN</sequence>
<protein>
    <recommendedName>
        <fullName evidence="1">Large ribosomal subunit protein uL10</fullName>
    </recommendedName>
    <alternativeName>
        <fullName evidence="2">50S ribosomal protein L10</fullName>
    </alternativeName>
</protein>
<dbReference type="EMBL" id="CP000395">
    <property type="protein sequence ID" value="ABH01662.1"/>
    <property type="molecule type" value="Genomic_DNA"/>
</dbReference>
<dbReference type="EMBL" id="CP002933">
    <property type="protein sequence ID" value="AEL69619.1"/>
    <property type="molecule type" value="Genomic_DNA"/>
</dbReference>
<dbReference type="RefSeq" id="WP_004790306.1">
    <property type="nucleotide sequence ID" value="NZ_CP160066.1"/>
</dbReference>
<dbReference type="SMR" id="Q0SNB6"/>
<dbReference type="STRING" id="29518.BLA32_02350"/>
<dbReference type="GeneID" id="77265229"/>
<dbReference type="KEGG" id="baf:BAPKO_0406"/>
<dbReference type="KEGG" id="bafz:BafPKo_0393"/>
<dbReference type="PATRIC" id="fig|390236.22.peg.386"/>
<dbReference type="eggNOG" id="COG0244">
    <property type="taxonomic scope" value="Bacteria"/>
</dbReference>
<dbReference type="HOGENOM" id="CLU_092227_1_2_12"/>
<dbReference type="OrthoDB" id="9808307at2"/>
<dbReference type="Proteomes" id="UP000005216">
    <property type="component" value="Chromosome"/>
</dbReference>
<dbReference type="GO" id="GO:0015934">
    <property type="term" value="C:large ribosomal subunit"/>
    <property type="evidence" value="ECO:0007669"/>
    <property type="project" value="InterPro"/>
</dbReference>
<dbReference type="GO" id="GO:0070180">
    <property type="term" value="F:large ribosomal subunit rRNA binding"/>
    <property type="evidence" value="ECO:0007669"/>
    <property type="project" value="UniProtKB-UniRule"/>
</dbReference>
<dbReference type="GO" id="GO:0003735">
    <property type="term" value="F:structural constituent of ribosome"/>
    <property type="evidence" value="ECO:0007669"/>
    <property type="project" value="InterPro"/>
</dbReference>
<dbReference type="GO" id="GO:0006412">
    <property type="term" value="P:translation"/>
    <property type="evidence" value="ECO:0007669"/>
    <property type="project" value="UniProtKB-UniRule"/>
</dbReference>
<dbReference type="CDD" id="cd05797">
    <property type="entry name" value="Ribosomal_L10"/>
    <property type="match status" value="1"/>
</dbReference>
<dbReference type="Gene3D" id="3.30.70.1730">
    <property type="match status" value="1"/>
</dbReference>
<dbReference type="Gene3D" id="6.10.250.2350">
    <property type="match status" value="1"/>
</dbReference>
<dbReference type="HAMAP" id="MF_00362">
    <property type="entry name" value="Ribosomal_uL10"/>
    <property type="match status" value="1"/>
</dbReference>
<dbReference type="InterPro" id="IPR001790">
    <property type="entry name" value="Ribosomal_uL10"/>
</dbReference>
<dbReference type="InterPro" id="IPR043141">
    <property type="entry name" value="Ribosomal_uL10-like_sf"/>
</dbReference>
<dbReference type="InterPro" id="IPR022973">
    <property type="entry name" value="Ribosomal_uL10_bac"/>
</dbReference>
<dbReference type="InterPro" id="IPR047865">
    <property type="entry name" value="Ribosomal_uL10_bac_type"/>
</dbReference>
<dbReference type="InterPro" id="IPR002363">
    <property type="entry name" value="Ribosomal_uL10_CS_bac"/>
</dbReference>
<dbReference type="NCBIfam" id="NF000955">
    <property type="entry name" value="PRK00099.1-1"/>
    <property type="match status" value="1"/>
</dbReference>
<dbReference type="PANTHER" id="PTHR11560">
    <property type="entry name" value="39S RIBOSOMAL PROTEIN L10, MITOCHONDRIAL"/>
    <property type="match status" value="1"/>
</dbReference>
<dbReference type="Pfam" id="PF00466">
    <property type="entry name" value="Ribosomal_L10"/>
    <property type="match status" value="1"/>
</dbReference>
<dbReference type="SUPFAM" id="SSF160369">
    <property type="entry name" value="Ribosomal protein L10-like"/>
    <property type="match status" value="1"/>
</dbReference>
<dbReference type="PROSITE" id="PS01109">
    <property type="entry name" value="RIBOSOMAL_L10"/>
    <property type="match status" value="1"/>
</dbReference>
<evidence type="ECO:0000255" key="1">
    <source>
        <dbReference type="HAMAP-Rule" id="MF_00362"/>
    </source>
</evidence>
<evidence type="ECO:0000305" key="2"/>
<accession>Q0SNB6</accession>
<accession>G0IS38</accession>
<feature type="chain" id="PRO_1000005472" description="Large ribosomal subunit protein uL10">
    <location>
        <begin position="1"/>
        <end position="162"/>
    </location>
</feature>